<reference key="1">
    <citation type="journal article" date="2006" name="Proc. Natl. Acad. Sci. U.S.A.">
        <title>Comparative genomics of the lactic acid bacteria.</title>
        <authorList>
            <person name="Makarova K.S."/>
            <person name="Slesarev A."/>
            <person name="Wolf Y.I."/>
            <person name="Sorokin A."/>
            <person name="Mirkin B."/>
            <person name="Koonin E.V."/>
            <person name="Pavlov A."/>
            <person name="Pavlova N."/>
            <person name="Karamychev V."/>
            <person name="Polouchine N."/>
            <person name="Shakhova V."/>
            <person name="Grigoriev I."/>
            <person name="Lou Y."/>
            <person name="Rohksar D."/>
            <person name="Lucas S."/>
            <person name="Huang K."/>
            <person name="Goodstein D.M."/>
            <person name="Hawkins T."/>
            <person name="Plengvidhya V."/>
            <person name="Welker D."/>
            <person name="Hughes J."/>
            <person name="Goh Y."/>
            <person name="Benson A."/>
            <person name="Baldwin K."/>
            <person name="Lee J.-H."/>
            <person name="Diaz-Muniz I."/>
            <person name="Dosti B."/>
            <person name="Smeianov V."/>
            <person name="Wechter W."/>
            <person name="Barabote R."/>
            <person name="Lorca G."/>
            <person name="Altermann E."/>
            <person name="Barrangou R."/>
            <person name="Ganesan B."/>
            <person name="Xie Y."/>
            <person name="Rawsthorne H."/>
            <person name="Tamir D."/>
            <person name="Parker C."/>
            <person name="Breidt F."/>
            <person name="Broadbent J.R."/>
            <person name="Hutkins R."/>
            <person name="O'Sullivan D."/>
            <person name="Steele J."/>
            <person name="Unlu G."/>
            <person name="Saier M.H. Jr."/>
            <person name="Klaenhammer T."/>
            <person name="Richardson P."/>
            <person name="Kozyavkin S."/>
            <person name="Weimer B.C."/>
            <person name="Mills D.A."/>
        </authorList>
    </citation>
    <scope>NUCLEOTIDE SEQUENCE [LARGE SCALE GENOMIC DNA]</scope>
    <source>
        <strain>ATCC BAA-491 / LMD-9</strain>
    </source>
</reference>
<proteinExistence type="inferred from homology"/>
<accession>Q03I91</accession>
<name>RL9_STRTD</name>
<gene>
    <name evidence="1" type="primary">rplI</name>
    <name type="ordered locus">STER_1976</name>
</gene>
<protein>
    <recommendedName>
        <fullName evidence="1">Large ribosomal subunit protein bL9</fullName>
    </recommendedName>
    <alternativeName>
        <fullName evidence="2">50S ribosomal protein L9</fullName>
    </alternativeName>
</protein>
<comment type="function">
    <text evidence="1">Binds to the 23S rRNA.</text>
</comment>
<comment type="similarity">
    <text evidence="1">Belongs to the bacterial ribosomal protein bL9 family.</text>
</comment>
<organism>
    <name type="scientific">Streptococcus thermophilus (strain ATCC BAA-491 / LMD-9)</name>
    <dbReference type="NCBI Taxonomy" id="322159"/>
    <lineage>
        <taxon>Bacteria</taxon>
        <taxon>Bacillati</taxon>
        <taxon>Bacillota</taxon>
        <taxon>Bacilli</taxon>
        <taxon>Lactobacillales</taxon>
        <taxon>Streptococcaceae</taxon>
        <taxon>Streptococcus</taxon>
    </lineage>
</organism>
<evidence type="ECO:0000255" key="1">
    <source>
        <dbReference type="HAMAP-Rule" id="MF_00503"/>
    </source>
</evidence>
<evidence type="ECO:0000305" key="2"/>
<dbReference type="EMBL" id="CP000419">
    <property type="protein sequence ID" value="ABJ67081.1"/>
    <property type="molecule type" value="Genomic_DNA"/>
</dbReference>
<dbReference type="RefSeq" id="WP_002952263.1">
    <property type="nucleotide sequence ID" value="NC_008532.1"/>
</dbReference>
<dbReference type="SMR" id="Q03I91"/>
<dbReference type="KEGG" id="ste:STER_1976"/>
<dbReference type="HOGENOM" id="CLU_078938_3_2_9"/>
<dbReference type="GO" id="GO:1990904">
    <property type="term" value="C:ribonucleoprotein complex"/>
    <property type="evidence" value="ECO:0007669"/>
    <property type="project" value="UniProtKB-KW"/>
</dbReference>
<dbReference type="GO" id="GO:0005840">
    <property type="term" value="C:ribosome"/>
    <property type="evidence" value="ECO:0007669"/>
    <property type="project" value="UniProtKB-KW"/>
</dbReference>
<dbReference type="GO" id="GO:0019843">
    <property type="term" value="F:rRNA binding"/>
    <property type="evidence" value="ECO:0007669"/>
    <property type="project" value="UniProtKB-UniRule"/>
</dbReference>
<dbReference type="GO" id="GO:0003735">
    <property type="term" value="F:structural constituent of ribosome"/>
    <property type="evidence" value="ECO:0007669"/>
    <property type="project" value="InterPro"/>
</dbReference>
<dbReference type="GO" id="GO:0006412">
    <property type="term" value="P:translation"/>
    <property type="evidence" value="ECO:0007669"/>
    <property type="project" value="UniProtKB-UniRule"/>
</dbReference>
<dbReference type="FunFam" id="3.40.5.10:FF:000002">
    <property type="entry name" value="50S ribosomal protein L9"/>
    <property type="match status" value="1"/>
</dbReference>
<dbReference type="Gene3D" id="3.10.430.100">
    <property type="entry name" value="Ribosomal protein L9, C-terminal domain"/>
    <property type="match status" value="1"/>
</dbReference>
<dbReference type="Gene3D" id="3.40.5.10">
    <property type="entry name" value="Ribosomal protein L9, N-terminal domain"/>
    <property type="match status" value="1"/>
</dbReference>
<dbReference type="HAMAP" id="MF_00503">
    <property type="entry name" value="Ribosomal_bL9"/>
    <property type="match status" value="1"/>
</dbReference>
<dbReference type="InterPro" id="IPR000244">
    <property type="entry name" value="Ribosomal_bL9"/>
</dbReference>
<dbReference type="InterPro" id="IPR009027">
    <property type="entry name" value="Ribosomal_bL9/RNase_H1_N"/>
</dbReference>
<dbReference type="InterPro" id="IPR020594">
    <property type="entry name" value="Ribosomal_bL9_bac/chp"/>
</dbReference>
<dbReference type="InterPro" id="IPR020069">
    <property type="entry name" value="Ribosomal_bL9_C"/>
</dbReference>
<dbReference type="InterPro" id="IPR036791">
    <property type="entry name" value="Ribosomal_bL9_C_sf"/>
</dbReference>
<dbReference type="InterPro" id="IPR020070">
    <property type="entry name" value="Ribosomal_bL9_N"/>
</dbReference>
<dbReference type="InterPro" id="IPR036935">
    <property type="entry name" value="Ribosomal_bL9_N_sf"/>
</dbReference>
<dbReference type="NCBIfam" id="TIGR00158">
    <property type="entry name" value="L9"/>
    <property type="match status" value="1"/>
</dbReference>
<dbReference type="PANTHER" id="PTHR21368">
    <property type="entry name" value="50S RIBOSOMAL PROTEIN L9"/>
    <property type="match status" value="1"/>
</dbReference>
<dbReference type="Pfam" id="PF03948">
    <property type="entry name" value="Ribosomal_L9_C"/>
    <property type="match status" value="1"/>
</dbReference>
<dbReference type="Pfam" id="PF01281">
    <property type="entry name" value="Ribosomal_L9_N"/>
    <property type="match status" value="1"/>
</dbReference>
<dbReference type="SUPFAM" id="SSF55658">
    <property type="entry name" value="L9 N-domain-like"/>
    <property type="match status" value="1"/>
</dbReference>
<dbReference type="SUPFAM" id="SSF55653">
    <property type="entry name" value="Ribosomal protein L9 C-domain"/>
    <property type="match status" value="1"/>
</dbReference>
<dbReference type="PROSITE" id="PS00651">
    <property type="entry name" value="RIBOSOMAL_L9"/>
    <property type="match status" value="1"/>
</dbReference>
<sequence length="152" mass="17099">MKVIFLQDVKGKGKKGEIKEVPLGYAQNFLIKKNLAKEATKQAIGELKGKQKSEEKHAAELLAEAKRVKEQLEKEENRLQFTEKVGPDGRTFGSITAKKIAEGLQKQFGIKIDKRHIELEHPIRAIGLIEVPVKLHKEVNAQIKLNIKNSAE</sequence>
<feature type="chain" id="PRO_1000014873" description="Large ribosomal subunit protein bL9">
    <location>
        <begin position="1"/>
        <end position="152"/>
    </location>
</feature>
<keyword id="KW-0687">Ribonucleoprotein</keyword>
<keyword id="KW-0689">Ribosomal protein</keyword>
<keyword id="KW-0694">RNA-binding</keyword>
<keyword id="KW-0699">rRNA-binding</keyword>